<evidence type="ECO:0000250" key="1">
    <source>
        <dbReference type="UniProtKB" id="P31129"/>
    </source>
</evidence>
<evidence type="ECO:0000250" key="2">
    <source>
        <dbReference type="UniProtKB" id="P76147"/>
    </source>
</evidence>
<evidence type="ECO:0000255" key="3"/>
<evidence type="ECO:0000255" key="4">
    <source>
        <dbReference type="PROSITE-ProRule" id="PRU00095"/>
    </source>
</evidence>
<evidence type="ECO:0000305" key="5"/>
<name>DGCF_ECO57</name>
<sequence length="472" mass="52166">MHVHPISTFRVFQEGHLLRNSIAIFALTTLFYFIGAELRLVHELSLFWPLNGVMAGVFARYVWLNRLHYYAISYVAMLVYDAITTEWGLVSLAINFSNMMFIVTVALLVVRDKRLGKNKYEPVSALRLFNYCLIAALLCAIVGAIGSVSIDSLDFWPLLADWFSEQFSTGVLIVPCMLTLAIPGVLPRFKAEQMMPAIALIVSVIASVVIGGAGSLAFPLPALIWCAVRYTPQVTCLLTFVTGAVEIVLVANSVIDISVGSPFSIPQMFSARLGIATMAICPIMVSFSVAAINSLMKQVALRADFDFLTQVYSRSGLYEALKSPSLKQTQHLTVMLLDIDYFKSINDNYGHECGDKVLSVFARHIQKIVGDKGLVARMGGEEFAVAVPSVNPVDGLLMAEKIRKGVELQPFTWQQKTLYLTVSIGVGSGRASYRTLTDDFNKLMVEADTCLYRSKKDGRNRTSTMRYGEEVV</sequence>
<proteinExistence type="inferred from homology"/>
<dbReference type="EC" id="2.7.7.65" evidence="1"/>
<dbReference type="EMBL" id="AE005174">
    <property type="protein sequence ID" value="AAG56243.1"/>
    <property type="status" value="ALT_SEQ"/>
    <property type="molecule type" value="Genomic_DNA"/>
</dbReference>
<dbReference type="EMBL" id="AE005174">
    <property type="protein sequence ID" value="AAG56244.1"/>
    <property type="status" value="ALT_SEQ"/>
    <property type="molecule type" value="Genomic_DNA"/>
</dbReference>
<dbReference type="EMBL" id="BA000007">
    <property type="protein sequence ID" value="BAB35552.2"/>
    <property type="molecule type" value="Genomic_DNA"/>
</dbReference>
<dbReference type="PIR" id="A90895">
    <property type="entry name" value="A90895"/>
</dbReference>
<dbReference type="PIR" id="G85722">
    <property type="entry name" value="G85722"/>
</dbReference>
<dbReference type="PIR" id="H85722">
    <property type="entry name" value="H85722"/>
</dbReference>
<dbReference type="RefSeq" id="NP_310156.1">
    <property type="nucleotide sequence ID" value="NC_002695.1"/>
</dbReference>
<dbReference type="RefSeq" id="WP_000558061.1">
    <property type="nucleotide sequence ID" value="NZ_SWKA01000005.1"/>
</dbReference>
<dbReference type="SMR" id="Q8XAZ4"/>
<dbReference type="STRING" id="155864.Z2182"/>
<dbReference type="GeneID" id="917328"/>
<dbReference type="KEGG" id="ece:Z2181"/>
<dbReference type="KEGG" id="ece:Z2182"/>
<dbReference type="KEGG" id="ecs:ECs_2129"/>
<dbReference type="PATRIC" id="fig|386585.9.peg.2235"/>
<dbReference type="eggNOG" id="COG2199">
    <property type="taxonomic scope" value="Bacteria"/>
</dbReference>
<dbReference type="HOGENOM" id="CLU_000445_11_27_6"/>
<dbReference type="UniPathway" id="UPA00599"/>
<dbReference type="Proteomes" id="UP000000558">
    <property type="component" value="Chromosome"/>
</dbReference>
<dbReference type="Proteomes" id="UP000002519">
    <property type="component" value="Chromosome"/>
</dbReference>
<dbReference type="GO" id="GO:0005886">
    <property type="term" value="C:plasma membrane"/>
    <property type="evidence" value="ECO:0007669"/>
    <property type="project" value="UniProtKB-SubCell"/>
</dbReference>
<dbReference type="GO" id="GO:0052621">
    <property type="term" value="F:diguanylate cyclase activity"/>
    <property type="evidence" value="ECO:0007669"/>
    <property type="project" value="UniProtKB-EC"/>
</dbReference>
<dbReference type="GO" id="GO:0005525">
    <property type="term" value="F:GTP binding"/>
    <property type="evidence" value="ECO:0007669"/>
    <property type="project" value="UniProtKB-KW"/>
</dbReference>
<dbReference type="GO" id="GO:0046872">
    <property type="term" value="F:metal ion binding"/>
    <property type="evidence" value="ECO:0007669"/>
    <property type="project" value="UniProtKB-KW"/>
</dbReference>
<dbReference type="GO" id="GO:0043709">
    <property type="term" value="P:cell adhesion involved in single-species biofilm formation"/>
    <property type="evidence" value="ECO:0007669"/>
    <property type="project" value="TreeGrafter"/>
</dbReference>
<dbReference type="GO" id="GO:1902201">
    <property type="term" value="P:negative regulation of bacterial-type flagellum-dependent cell motility"/>
    <property type="evidence" value="ECO:0007669"/>
    <property type="project" value="TreeGrafter"/>
</dbReference>
<dbReference type="CDD" id="cd01949">
    <property type="entry name" value="GGDEF"/>
    <property type="match status" value="1"/>
</dbReference>
<dbReference type="FunFam" id="3.30.70.270:FF:000034">
    <property type="entry name" value="Diguanylate cyclase domain protein"/>
    <property type="match status" value="1"/>
</dbReference>
<dbReference type="Gene3D" id="3.30.70.270">
    <property type="match status" value="1"/>
</dbReference>
<dbReference type="InterPro" id="IPR050469">
    <property type="entry name" value="Diguanylate_Cyclase"/>
</dbReference>
<dbReference type="InterPro" id="IPR000160">
    <property type="entry name" value="GGDEF_dom"/>
</dbReference>
<dbReference type="InterPro" id="IPR029787">
    <property type="entry name" value="Nucleotide_cyclase"/>
</dbReference>
<dbReference type="InterPro" id="IPR043128">
    <property type="entry name" value="Rev_trsase/Diguanyl_cyclase"/>
</dbReference>
<dbReference type="NCBIfam" id="TIGR00254">
    <property type="entry name" value="GGDEF"/>
    <property type="match status" value="1"/>
</dbReference>
<dbReference type="PANTHER" id="PTHR45138:SF9">
    <property type="entry name" value="DIGUANYLATE CYCLASE DGCM-RELATED"/>
    <property type="match status" value="1"/>
</dbReference>
<dbReference type="PANTHER" id="PTHR45138">
    <property type="entry name" value="REGULATORY COMPONENTS OF SENSORY TRANSDUCTION SYSTEM"/>
    <property type="match status" value="1"/>
</dbReference>
<dbReference type="Pfam" id="PF00990">
    <property type="entry name" value="GGDEF"/>
    <property type="match status" value="1"/>
</dbReference>
<dbReference type="SMART" id="SM00267">
    <property type="entry name" value="GGDEF"/>
    <property type="match status" value="1"/>
</dbReference>
<dbReference type="SUPFAM" id="SSF55073">
    <property type="entry name" value="Nucleotide cyclase"/>
    <property type="match status" value="1"/>
</dbReference>
<dbReference type="PROSITE" id="PS50887">
    <property type="entry name" value="GGDEF"/>
    <property type="match status" value="1"/>
</dbReference>
<organism>
    <name type="scientific">Escherichia coli O157:H7</name>
    <dbReference type="NCBI Taxonomy" id="83334"/>
    <lineage>
        <taxon>Bacteria</taxon>
        <taxon>Pseudomonadati</taxon>
        <taxon>Pseudomonadota</taxon>
        <taxon>Gammaproteobacteria</taxon>
        <taxon>Enterobacterales</taxon>
        <taxon>Enterobacteriaceae</taxon>
        <taxon>Escherichia</taxon>
    </lineage>
</organism>
<feature type="chain" id="PRO_0000201337" description="Probable diguanylate cyclase DgcF">
    <location>
        <begin position="1"/>
        <end position="472"/>
    </location>
</feature>
<feature type="transmembrane region" description="Helical" evidence="3">
    <location>
        <begin position="21"/>
        <end position="41"/>
    </location>
</feature>
<feature type="transmembrane region" description="Helical" evidence="3">
    <location>
        <begin position="44"/>
        <end position="64"/>
    </location>
</feature>
<feature type="transmembrane region" description="Helical" evidence="3">
    <location>
        <begin position="90"/>
        <end position="110"/>
    </location>
</feature>
<feature type="transmembrane region" description="Helical" evidence="3">
    <location>
        <begin position="128"/>
        <end position="148"/>
    </location>
</feature>
<feature type="transmembrane region" description="Helical" evidence="3">
    <location>
        <begin position="167"/>
        <end position="187"/>
    </location>
</feature>
<feature type="transmembrane region" description="Helical" evidence="3">
    <location>
        <begin position="198"/>
        <end position="218"/>
    </location>
</feature>
<feature type="transmembrane region" description="Helical" evidence="3">
    <location>
        <begin position="237"/>
        <end position="257"/>
    </location>
</feature>
<feature type="transmembrane region" description="Helical" evidence="3">
    <location>
        <begin position="273"/>
        <end position="293"/>
    </location>
</feature>
<feature type="domain" description="GGDEF" evidence="4">
    <location>
        <begin position="330"/>
        <end position="467"/>
    </location>
</feature>
<feature type="binding site" evidence="1">
    <location>
        <position position="338"/>
    </location>
    <ligand>
        <name>Mg(2+)</name>
        <dbReference type="ChEBI" id="CHEBI:18420"/>
    </ligand>
</feature>
<feature type="binding site" evidence="1">
    <location>
        <position position="339"/>
    </location>
    <ligand>
        <name>Mg(2+)</name>
        <dbReference type="ChEBI" id="CHEBI:18420"/>
    </ligand>
</feature>
<feature type="binding site" evidence="1">
    <location>
        <position position="346"/>
    </location>
    <ligand>
        <name>substrate</name>
    </ligand>
</feature>
<feature type="binding site" evidence="1">
    <location>
        <position position="351"/>
    </location>
    <ligand>
        <name>substrate</name>
    </ligand>
</feature>
<feature type="binding site" evidence="1">
    <location>
        <position position="355"/>
    </location>
    <ligand>
        <name>substrate</name>
    </ligand>
</feature>
<feature type="binding site" evidence="1">
    <location>
        <position position="381"/>
    </location>
    <ligand>
        <name>Mg(2+)</name>
        <dbReference type="ChEBI" id="CHEBI:18420"/>
    </ligand>
</feature>
<reference key="1">
    <citation type="journal article" date="2001" name="Nature">
        <title>Genome sequence of enterohaemorrhagic Escherichia coli O157:H7.</title>
        <authorList>
            <person name="Perna N.T."/>
            <person name="Plunkett G. III"/>
            <person name="Burland V."/>
            <person name="Mau B."/>
            <person name="Glasner J.D."/>
            <person name="Rose D.J."/>
            <person name="Mayhew G.F."/>
            <person name="Evans P.S."/>
            <person name="Gregor J."/>
            <person name="Kirkpatrick H.A."/>
            <person name="Posfai G."/>
            <person name="Hackett J."/>
            <person name="Klink S."/>
            <person name="Boutin A."/>
            <person name="Shao Y."/>
            <person name="Miller L."/>
            <person name="Grotbeck E.J."/>
            <person name="Davis N.W."/>
            <person name="Lim A."/>
            <person name="Dimalanta E.T."/>
            <person name="Potamousis K."/>
            <person name="Apodaca J."/>
            <person name="Anantharaman T.S."/>
            <person name="Lin J."/>
            <person name="Yen G."/>
            <person name="Schwartz D.C."/>
            <person name="Welch R.A."/>
            <person name="Blattner F.R."/>
        </authorList>
    </citation>
    <scope>NUCLEOTIDE SEQUENCE [LARGE SCALE GENOMIC DNA]</scope>
    <source>
        <strain>O157:H7 / EDL933 / ATCC 700927 / EHEC</strain>
    </source>
</reference>
<reference key="2">
    <citation type="journal article" date="2001" name="DNA Res.">
        <title>Complete genome sequence of enterohemorrhagic Escherichia coli O157:H7 and genomic comparison with a laboratory strain K-12.</title>
        <authorList>
            <person name="Hayashi T."/>
            <person name="Makino K."/>
            <person name="Ohnishi M."/>
            <person name="Kurokawa K."/>
            <person name="Ishii K."/>
            <person name="Yokoyama K."/>
            <person name="Han C.-G."/>
            <person name="Ohtsubo E."/>
            <person name="Nakayama K."/>
            <person name="Murata T."/>
            <person name="Tanaka M."/>
            <person name="Tobe T."/>
            <person name="Iida T."/>
            <person name="Takami H."/>
            <person name="Honda T."/>
            <person name="Sasakawa C."/>
            <person name="Ogasawara N."/>
            <person name="Yasunaga T."/>
            <person name="Kuhara S."/>
            <person name="Shiba T."/>
            <person name="Hattori M."/>
            <person name="Shinagawa H."/>
        </authorList>
    </citation>
    <scope>NUCLEOTIDE SEQUENCE [LARGE SCALE GENOMIC DNA]</scope>
    <source>
        <strain>O157:H7 / Sakai / RIMD 0509952 / EHEC</strain>
    </source>
</reference>
<accession>Q8XAZ4</accession>
<accession>Q8X472</accession>
<gene>
    <name evidence="2" type="primary">dgcF</name>
    <name type="synonym">yneF</name>
    <name type="ordered locus">Z2181/Z2182</name>
    <name type="ordered locus">ECs2129</name>
</gene>
<protein>
    <recommendedName>
        <fullName evidence="5">Probable diguanylate cyclase DgcF</fullName>
        <shortName evidence="5">DGC</shortName>
        <ecNumber evidence="1">2.7.7.65</ecNumber>
    </recommendedName>
</protein>
<comment type="function">
    <text evidence="1">Catalyzes the synthesis of cyclic-di-GMP (c-di-GMP) via the condensation of 2 GTP molecules.</text>
</comment>
<comment type="catalytic activity">
    <reaction evidence="1">
        <text>2 GTP = 3',3'-c-di-GMP + 2 diphosphate</text>
        <dbReference type="Rhea" id="RHEA:24898"/>
        <dbReference type="ChEBI" id="CHEBI:33019"/>
        <dbReference type="ChEBI" id="CHEBI:37565"/>
        <dbReference type="ChEBI" id="CHEBI:58805"/>
        <dbReference type="EC" id="2.7.7.65"/>
    </reaction>
</comment>
<comment type="cofactor">
    <cofactor evidence="1">
        <name>Mg(2+)</name>
        <dbReference type="ChEBI" id="CHEBI:18420"/>
    </cofactor>
    <text evidence="1">Binds 1 Mg(2+) ion per monomer.</text>
</comment>
<comment type="pathway">
    <text evidence="5">Purine metabolism; 3',5'-cyclic di-GMP biosynthesis.</text>
</comment>
<comment type="subunit">
    <text evidence="1">Homodimer.</text>
</comment>
<comment type="subcellular location">
    <subcellularLocation>
        <location evidence="5">Cell membrane</location>
        <topology evidence="3">Multi-pass membrane protein</topology>
    </subcellularLocation>
</comment>
<comment type="sequence caution" evidence="5">
    <conflict type="erroneous initiation">
        <sequence resource="EMBL-CDS" id="AAG56243"/>
    </conflict>
    <text>Truncated N-terminus.</text>
</comment>
<comment type="sequence caution" evidence="5">
    <conflict type="frameshift">
        <sequence resource="EMBL-CDS" id="AAG56243"/>
    </conflict>
</comment>
<comment type="sequence caution" evidence="5">
    <conflict type="erroneous initiation">
        <sequence resource="EMBL-CDS" id="AAG56244"/>
    </conflict>
    <text>Truncated N-terminus.</text>
</comment>
<comment type="sequence caution" evidence="5">
    <conflict type="frameshift">
        <sequence resource="EMBL-CDS" id="AAG56244"/>
    </conflict>
</comment>
<keyword id="KW-1003">Cell membrane</keyword>
<keyword id="KW-0342">GTP-binding</keyword>
<keyword id="KW-0460">Magnesium</keyword>
<keyword id="KW-0472">Membrane</keyword>
<keyword id="KW-0479">Metal-binding</keyword>
<keyword id="KW-0547">Nucleotide-binding</keyword>
<keyword id="KW-1185">Reference proteome</keyword>
<keyword id="KW-0808">Transferase</keyword>
<keyword id="KW-0812">Transmembrane</keyword>
<keyword id="KW-1133">Transmembrane helix</keyword>